<comment type="function">
    <text evidence="1">Transports electrons between flavodoxin or ferredoxin and NADPH.</text>
</comment>
<comment type="catalytic activity">
    <reaction evidence="1">
        <text>2 reduced [2Fe-2S]-[ferredoxin] + NADP(+) + H(+) = 2 oxidized [2Fe-2S]-[ferredoxin] + NADPH</text>
        <dbReference type="Rhea" id="RHEA:20125"/>
        <dbReference type="Rhea" id="RHEA-COMP:10000"/>
        <dbReference type="Rhea" id="RHEA-COMP:10001"/>
        <dbReference type="ChEBI" id="CHEBI:15378"/>
        <dbReference type="ChEBI" id="CHEBI:33737"/>
        <dbReference type="ChEBI" id="CHEBI:33738"/>
        <dbReference type="ChEBI" id="CHEBI:57783"/>
        <dbReference type="ChEBI" id="CHEBI:58349"/>
        <dbReference type="EC" id="1.18.1.2"/>
    </reaction>
</comment>
<comment type="catalytic activity">
    <reaction evidence="1">
        <text>reduced [flavodoxin] + NADP(+) = oxidized [flavodoxin] + NADPH + 2 H(+)</text>
        <dbReference type="Rhea" id="RHEA:50756"/>
        <dbReference type="Rhea" id="RHEA-COMP:10622"/>
        <dbReference type="Rhea" id="RHEA-COMP:10623"/>
        <dbReference type="ChEBI" id="CHEBI:15378"/>
        <dbReference type="ChEBI" id="CHEBI:57618"/>
        <dbReference type="ChEBI" id="CHEBI:57783"/>
        <dbReference type="ChEBI" id="CHEBI:58210"/>
        <dbReference type="ChEBI" id="CHEBI:58349"/>
        <dbReference type="EC" id="1.19.1.1"/>
    </reaction>
</comment>
<comment type="cofactor">
    <cofactor evidence="1">
        <name>FAD</name>
        <dbReference type="ChEBI" id="CHEBI:57692"/>
    </cofactor>
</comment>
<comment type="subcellular location">
    <subcellularLocation>
        <location evidence="1">Cytoplasm</location>
    </subcellularLocation>
</comment>
<comment type="similarity">
    <text evidence="3">Belongs to the ferredoxin--NADP reductase type 1 family.</text>
</comment>
<comment type="sequence caution" evidence="3">
    <conflict type="frameshift">
        <sequence resource="EMBL-CDS" id="CAA77813"/>
    </conflict>
</comment>
<name>FENR_SHIFL</name>
<accession>P28901</accession>
<keyword id="KW-0963">Cytoplasm</keyword>
<keyword id="KW-0274">FAD</keyword>
<keyword id="KW-0285">Flavoprotein</keyword>
<keyword id="KW-0521">NADP</keyword>
<keyword id="KW-0547">Nucleotide-binding</keyword>
<keyword id="KW-0560">Oxidoreductase</keyword>
<keyword id="KW-1185">Reference proteome</keyword>
<gene>
    <name type="primary">fpr</name>
    <name type="synonym">mvrA</name>
    <name type="ordered locus">SF4002</name>
    <name type="ordered locus">S3745</name>
</gene>
<proteinExistence type="inferred from homology"/>
<feature type="chain" id="PRO_0000167644" description="Flavodoxin/ferredoxin--NADP reductase">
    <location>
        <begin position="1"/>
        <end position="248"/>
    </location>
</feature>
<feature type="domain" description="FAD-binding FR-type" evidence="2">
    <location>
        <begin position="2"/>
        <end position="101"/>
    </location>
</feature>
<feature type="binding site" evidence="1">
    <location>
        <begin position="50"/>
        <end position="53"/>
    </location>
    <ligand>
        <name>FAD</name>
        <dbReference type="ChEBI" id="CHEBI:57692"/>
    </ligand>
</feature>
<feature type="binding site" evidence="1">
    <location>
        <position position="66"/>
    </location>
    <ligand>
        <name>FAD</name>
        <dbReference type="ChEBI" id="CHEBI:57692"/>
    </ligand>
</feature>
<feature type="binding site" evidence="1">
    <location>
        <begin position="74"/>
        <end position="76"/>
    </location>
    <ligand>
        <name>FAD</name>
        <dbReference type="ChEBI" id="CHEBI:57692"/>
    </ligand>
</feature>
<feature type="binding site" evidence="1">
    <location>
        <position position="116"/>
    </location>
    <ligand>
        <name>FAD</name>
        <dbReference type="ChEBI" id="CHEBI:57692"/>
    </ligand>
</feature>
<feature type="binding site" evidence="1">
    <location>
        <begin position="143"/>
        <end position="144"/>
    </location>
    <ligand>
        <name>NADP(+)</name>
        <dbReference type="ChEBI" id="CHEBI:58349"/>
    </ligand>
</feature>
<feature type="binding site" evidence="1">
    <location>
        <begin position="173"/>
        <end position="174"/>
    </location>
    <ligand>
        <name>NADP(+)</name>
        <dbReference type="ChEBI" id="CHEBI:58349"/>
    </ligand>
</feature>
<feature type="binding site" evidence="1">
    <location>
        <position position="184"/>
    </location>
    <ligand>
        <name>NADP(+)</name>
        <dbReference type="ChEBI" id="CHEBI:58349"/>
    </ligand>
</feature>
<feature type="binding site" evidence="1">
    <location>
        <begin position="214"/>
        <end position="216"/>
    </location>
    <ligand>
        <name>NADP(+)</name>
        <dbReference type="ChEBI" id="CHEBI:58349"/>
    </ligand>
</feature>
<feature type="binding site" evidence="1">
    <location>
        <position position="220"/>
    </location>
    <ligand>
        <name>NADP(+)</name>
        <dbReference type="ChEBI" id="CHEBI:58349"/>
    </ligand>
</feature>
<feature type="binding site" evidence="1">
    <location>
        <begin position="247"/>
        <end position="248"/>
    </location>
    <ligand>
        <name>FAD</name>
        <dbReference type="ChEBI" id="CHEBI:57692"/>
    </ligand>
</feature>
<protein>
    <recommendedName>
        <fullName evidence="1">Flavodoxin/ferredoxin--NADP reductase</fullName>
        <ecNumber evidence="1">1.18.1.2</ecNumber>
        <ecNumber evidence="1">1.19.1.1</ecNumber>
    </recommendedName>
    <alternativeName>
        <fullName evidence="1">Ferredoxin (flavodoxin):NADP(+) oxidoreductase</fullName>
    </alternativeName>
    <alternativeName>
        <fullName evidence="1">Ferredoxin--NADP reductase</fullName>
        <shortName evidence="1">FNR</shortName>
    </alternativeName>
    <alternativeName>
        <fullName evidence="1">Flavodoxin--NADP reductase</fullName>
        <shortName evidence="1">FLDR</shortName>
    </alternativeName>
</protein>
<sequence>MADWVTGKVTKVQNWTDALFSLTVHAPVLPFTAGQFTKLGLEIDGERVQRAYSYVNSPDNPDLEFYLVTVPDGKLSPRLAALKPGDEVQVVSEAAGFFVLDEVPDCETLWMLATGTAIGPYLSILQLGKDLDRFKNLVLVHAARYAADLSYLPLMQELEKRYEGKLRIQTVVSRETAAGSLTGRIPALIESGELESAIGLPMNKETSHVMLCGNPQMVRDTQQLLKETRQMTKHLRRRPGHMTAEHYW</sequence>
<evidence type="ECO:0000250" key="1">
    <source>
        <dbReference type="UniProtKB" id="P28861"/>
    </source>
</evidence>
<evidence type="ECO:0000255" key="2">
    <source>
        <dbReference type="PROSITE-ProRule" id="PRU00716"/>
    </source>
</evidence>
<evidence type="ECO:0000305" key="3"/>
<organism>
    <name type="scientific">Shigella flexneri</name>
    <dbReference type="NCBI Taxonomy" id="623"/>
    <lineage>
        <taxon>Bacteria</taxon>
        <taxon>Pseudomonadati</taxon>
        <taxon>Pseudomonadota</taxon>
        <taxon>Gammaproteobacteria</taxon>
        <taxon>Enterobacterales</taxon>
        <taxon>Enterobacteriaceae</taxon>
        <taxon>Shigella</taxon>
    </lineage>
</organism>
<dbReference type="EC" id="1.18.1.2" evidence="1"/>
<dbReference type="EC" id="1.19.1.1" evidence="1"/>
<dbReference type="EMBL" id="AE005674">
    <property type="protein sequence ID" value="AAN45435.1"/>
    <property type="molecule type" value="Genomic_DNA"/>
</dbReference>
<dbReference type="EMBL" id="AE014073">
    <property type="protein sequence ID" value="AAP18765.1"/>
    <property type="molecule type" value="Genomic_DNA"/>
</dbReference>
<dbReference type="EMBL" id="Z11766">
    <property type="protein sequence ID" value="CAA77813.1"/>
    <property type="status" value="ALT_FRAME"/>
    <property type="molecule type" value="Genomic_DNA"/>
</dbReference>
<dbReference type="PIR" id="S23906">
    <property type="entry name" value="S23906"/>
</dbReference>
<dbReference type="RefSeq" id="NP_709728.1">
    <property type="nucleotide sequence ID" value="NC_004337.2"/>
</dbReference>
<dbReference type="RefSeq" id="WP_000796320.1">
    <property type="nucleotide sequence ID" value="NZ_WPGW01000012.1"/>
</dbReference>
<dbReference type="SMR" id="P28901"/>
<dbReference type="STRING" id="198214.SF4002"/>
<dbReference type="PaxDb" id="198214-SF4002"/>
<dbReference type="GeneID" id="1023471"/>
<dbReference type="GeneID" id="75204597"/>
<dbReference type="KEGG" id="sfl:SF4002"/>
<dbReference type="KEGG" id="sfx:S3745"/>
<dbReference type="PATRIC" id="fig|198214.7.peg.4716"/>
<dbReference type="HOGENOM" id="CLU_003827_3_0_6"/>
<dbReference type="Proteomes" id="UP000001006">
    <property type="component" value="Chromosome"/>
</dbReference>
<dbReference type="Proteomes" id="UP000002673">
    <property type="component" value="Chromosome"/>
</dbReference>
<dbReference type="GO" id="GO:0005737">
    <property type="term" value="C:cytoplasm"/>
    <property type="evidence" value="ECO:0007669"/>
    <property type="project" value="UniProtKB-SubCell"/>
</dbReference>
<dbReference type="GO" id="GO:0004324">
    <property type="term" value="F:ferredoxin-NADP+ reductase activity"/>
    <property type="evidence" value="ECO:0007669"/>
    <property type="project" value="UniProtKB-EC"/>
</dbReference>
<dbReference type="GO" id="GO:0000166">
    <property type="term" value="F:nucleotide binding"/>
    <property type="evidence" value="ECO:0007669"/>
    <property type="project" value="UniProtKB-KW"/>
</dbReference>
<dbReference type="GO" id="GO:0034599">
    <property type="term" value="P:cellular response to oxidative stress"/>
    <property type="evidence" value="ECO:0007669"/>
    <property type="project" value="TreeGrafter"/>
</dbReference>
<dbReference type="GO" id="GO:0042167">
    <property type="term" value="P:heme catabolic process"/>
    <property type="evidence" value="ECO:0007669"/>
    <property type="project" value="TreeGrafter"/>
</dbReference>
<dbReference type="CDD" id="cd06195">
    <property type="entry name" value="FNR1"/>
    <property type="match status" value="1"/>
</dbReference>
<dbReference type="FunFam" id="2.40.30.10:FF:000044">
    <property type="entry name" value="Ferredoxin--NADP(+) reductase"/>
    <property type="match status" value="1"/>
</dbReference>
<dbReference type="FunFam" id="3.40.50.80:FF:000013">
    <property type="entry name" value="Ferredoxin--NADP(+) reductase"/>
    <property type="match status" value="1"/>
</dbReference>
<dbReference type="Gene3D" id="3.40.50.80">
    <property type="entry name" value="Nucleotide-binding domain of ferredoxin-NADP reductase (FNR) module"/>
    <property type="match status" value="1"/>
</dbReference>
<dbReference type="Gene3D" id="2.40.30.10">
    <property type="entry name" value="Translation factors"/>
    <property type="match status" value="1"/>
</dbReference>
<dbReference type="InterPro" id="IPR008333">
    <property type="entry name" value="Cbr1-like_FAD-bd_dom"/>
</dbReference>
<dbReference type="InterPro" id="IPR017927">
    <property type="entry name" value="FAD-bd_FR_type"/>
</dbReference>
<dbReference type="InterPro" id="IPR033892">
    <property type="entry name" value="FNR_bac"/>
</dbReference>
<dbReference type="InterPro" id="IPR039261">
    <property type="entry name" value="FNR_nucleotide-bd"/>
</dbReference>
<dbReference type="InterPro" id="IPR051930">
    <property type="entry name" value="FNR_type-1"/>
</dbReference>
<dbReference type="InterPro" id="IPR001433">
    <property type="entry name" value="OxRdtase_FAD/NAD-bd"/>
</dbReference>
<dbReference type="InterPro" id="IPR017938">
    <property type="entry name" value="Riboflavin_synthase-like_b-brl"/>
</dbReference>
<dbReference type="NCBIfam" id="NF008178">
    <property type="entry name" value="PRK10926.1"/>
    <property type="match status" value="1"/>
</dbReference>
<dbReference type="PANTHER" id="PTHR47878:SF1">
    <property type="entry name" value="FLAVODOXIN_FERREDOXIN--NADP REDUCTASE"/>
    <property type="match status" value="1"/>
</dbReference>
<dbReference type="PANTHER" id="PTHR47878">
    <property type="entry name" value="OXIDOREDUCTASE FAD/NAD(P)-BINDING DOMAIN PROTEIN"/>
    <property type="match status" value="1"/>
</dbReference>
<dbReference type="Pfam" id="PF00970">
    <property type="entry name" value="FAD_binding_6"/>
    <property type="match status" value="1"/>
</dbReference>
<dbReference type="Pfam" id="PF00175">
    <property type="entry name" value="NAD_binding_1"/>
    <property type="match status" value="1"/>
</dbReference>
<dbReference type="SUPFAM" id="SSF52343">
    <property type="entry name" value="Ferredoxin reductase-like, C-terminal NADP-linked domain"/>
    <property type="match status" value="1"/>
</dbReference>
<dbReference type="SUPFAM" id="SSF63380">
    <property type="entry name" value="Riboflavin synthase domain-like"/>
    <property type="match status" value="1"/>
</dbReference>
<dbReference type="PROSITE" id="PS51384">
    <property type="entry name" value="FAD_FR"/>
    <property type="match status" value="1"/>
</dbReference>
<reference key="1">
    <citation type="journal article" date="2002" name="Nucleic Acids Res.">
        <title>Genome sequence of Shigella flexneri 2a: insights into pathogenicity through comparison with genomes of Escherichia coli K12 and O157.</title>
        <authorList>
            <person name="Jin Q."/>
            <person name="Yuan Z."/>
            <person name="Xu J."/>
            <person name="Wang Y."/>
            <person name="Shen Y."/>
            <person name="Lu W."/>
            <person name="Wang J."/>
            <person name="Liu H."/>
            <person name="Yang J."/>
            <person name="Yang F."/>
            <person name="Zhang X."/>
            <person name="Zhang J."/>
            <person name="Yang G."/>
            <person name="Wu H."/>
            <person name="Qu D."/>
            <person name="Dong J."/>
            <person name="Sun L."/>
            <person name="Xue Y."/>
            <person name="Zhao A."/>
            <person name="Gao Y."/>
            <person name="Zhu J."/>
            <person name="Kan B."/>
            <person name="Ding K."/>
            <person name="Chen S."/>
            <person name="Cheng H."/>
            <person name="Yao Z."/>
            <person name="He B."/>
            <person name="Chen R."/>
            <person name="Ma D."/>
            <person name="Qiang B."/>
            <person name="Wen Y."/>
            <person name="Hou Y."/>
            <person name="Yu J."/>
        </authorList>
    </citation>
    <scope>NUCLEOTIDE SEQUENCE [LARGE SCALE GENOMIC DNA]</scope>
    <source>
        <strain>301 / Serotype 2a</strain>
    </source>
</reference>
<reference key="2">
    <citation type="journal article" date="2003" name="Infect. Immun.">
        <title>Complete genome sequence and comparative genomics of Shigella flexneri serotype 2a strain 2457T.</title>
        <authorList>
            <person name="Wei J."/>
            <person name="Goldberg M.B."/>
            <person name="Burland V."/>
            <person name="Venkatesan M.M."/>
            <person name="Deng W."/>
            <person name="Fournier G."/>
            <person name="Mayhew G.F."/>
            <person name="Plunkett G. III"/>
            <person name="Rose D.J."/>
            <person name="Darling A."/>
            <person name="Mau B."/>
            <person name="Perna N.T."/>
            <person name="Payne S.M."/>
            <person name="Runyen-Janecky L.J."/>
            <person name="Zhou S."/>
            <person name="Schwartz D.C."/>
            <person name="Blattner F.R."/>
        </authorList>
    </citation>
    <scope>NUCLEOTIDE SEQUENCE [LARGE SCALE GENOMIC DNA]</scope>
    <source>
        <strain>ATCC 700930 / 2457T / Serotype 2a</strain>
    </source>
</reference>
<reference key="3">
    <citation type="journal article" date="1992" name="J. Bacteriol.">
        <title>Molecular analysis of the glpFKX regions of Escherichia coli and Shigella flexneri.</title>
        <authorList>
            <person name="Truniger V."/>
            <person name="Boos W."/>
            <person name="Sweet G."/>
        </authorList>
    </citation>
    <scope>NUCLEOTIDE SEQUENCE [GENOMIC DNA] OF 1-135</scope>
    <source>
        <strain>M4243</strain>
    </source>
</reference>